<evidence type="ECO:0000250" key="1"/>
<evidence type="ECO:0000256" key="2">
    <source>
        <dbReference type="SAM" id="MobiDB-lite"/>
    </source>
</evidence>
<evidence type="ECO:0000305" key="3"/>
<proteinExistence type="inferred from homology"/>
<feature type="chain" id="PRO_0000105547" description="Flagellar hook-basal body complex protein FliE">
    <location>
        <begin position="1"/>
        <end position="109"/>
    </location>
</feature>
<feature type="region of interest" description="Disordered" evidence="2">
    <location>
        <begin position="1"/>
        <end position="38"/>
    </location>
</feature>
<feature type="compositionally biased region" description="Basic and acidic residues" evidence="2">
    <location>
        <begin position="19"/>
        <end position="38"/>
    </location>
</feature>
<gene>
    <name type="primary">fliE</name>
    <name type="ordered locus">jhp_1465</name>
</gene>
<protein>
    <recommendedName>
        <fullName>Flagellar hook-basal body complex protein FliE</fullName>
    </recommendedName>
</protein>
<sequence length="109" mass="12196">MQAIHNDKSLLSPFSELNTDNRTKREESGSTFKEQKGGEFSKLLKQSINELNNTQEQSDKALADMATGQIKDLHQAAIAIGKAETSMKLMLEVRNKAISAYKELLRTQI</sequence>
<reference key="1">
    <citation type="journal article" date="1999" name="Nature">
        <title>Genomic sequence comparison of two unrelated isolates of the human gastric pathogen Helicobacter pylori.</title>
        <authorList>
            <person name="Alm R.A."/>
            <person name="Ling L.-S.L."/>
            <person name="Moir D.T."/>
            <person name="King B.L."/>
            <person name="Brown E.D."/>
            <person name="Doig P.C."/>
            <person name="Smith D.R."/>
            <person name="Noonan B."/>
            <person name="Guild B.C."/>
            <person name="deJonge B.L."/>
            <person name="Carmel G."/>
            <person name="Tummino P.J."/>
            <person name="Caruso A."/>
            <person name="Uria-Nickelsen M."/>
            <person name="Mills D.M."/>
            <person name="Ives C."/>
            <person name="Gibson R."/>
            <person name="Merberg D."/>
            <person name="Mills S.D."/>
            <person name="Jiang Q."/>
            <person name="Taylor D.E."/>
            <person name="Vovis G.F."/>
            <person name="Trust T.J."/>
        </authorList>
    </citation>
    <scope>NUCLEOTIDE SEQUENCE [LARGE SCALE GENOMIC DNA]</scope>
    <source>
        <strain>J99 / ATCC 700824</strain>
    </source>
</reference>
<dbReference type="EMBL" id="AE001439">
    <property type="protein sequence ID" value="AAD07039.1"/>
    <property type="molecule type" value="Genomic_DNA"/>
</dbReference>
<dbReference type="RefSeq" id="WP_001147918.1">
    <property type="nucleotide sequence ID" value="NZ_CP011330.1"/>
</dbReference>
<dbReference type="SMR" id="P67709"/>
<dbReference type="KEGG" id="hpj:jhp_1465"/>
<dbReference type="PATRIC" id="fig|85963.30.peg.1077"/>
<dbReference type="eggNOG" id="COG1677">
    <property type="taxonomic scope" value="Bacteria"/>
</dbReference>
<dbReference type="Proteomes" id="UP000000804">
    <property type="component" value="Chromosome"/>
</dbReference>
<dbReference type="GO" id="GO:0009425">
    <property type="term" value="C:bacterial-type flagellum basal body"/>
    <property type="evidence" value="ECO:0007669"/>
    <property type="project" value="UniProtKB-SubCell"/>
</dbReference>
<dbReference type="GO" id="GO:0003774">
    <property type="term" value="F:cytoskeletal motor activity"/>
    <property type="evidence" value="ECO:0007669"/>
    <property type="project" value="InterPro"/>
</dbReference>
<dbReference type="GO" id="GO:0005198">
    <property type="term" value="F:structural molecule activity"/>
    <property type="evidence" value="ECO:0007669"/>
    <property type="project" value="InterPro"/>
</dbReference>
<dbReference type="GO" id="GO:0071973">
    <property type="term" value="P:bacterial-type flagellum-dependent cell motility"/>
    <property type="evidence" value="ECO:0007669"/>
    <property type="project" value="InterPro"/>
</dbReference>
<dbReference type="HAMAP" id="MF_00724">
    <property type="entry name" value="FliE"/>
    <property type="match status" value="1"/>
</dbReference>
<dbReference type="InterPro" id="IPR001624">
    <property type="entry name" value="FliE"/>
</dbReference>
<dbReference type="NCBIfam" id="TIGR00205">
    <property type="entry name" value="fliE"/>
    <property type="match status" value="1"/>
</dbReference>
<dbReference type="PANTHER" id="PTHR34653">
    <property type="match status" value="1"/>
</dbReference>
<dbReference type="PANTHER" id="PTHR34653:SF1">
    <property type="entry name" value="FLAGELLAR HOOK-BASAL BODY COMPLEX PROTEIN FLIE"/>
    <property type="match status" value="1"/>
</dbReference>
<dbReference type="Pfam" id="PF02049">
    <property type="entry name" value="FliE"/>
    <property type="match status" value="1"/>
</dbReference>
<dbReference type="PRINTS" id="PR01006">
    <property type="entry name" value="FLGHOOKFLIE"/>
</dbReference>
<organism>
    <name type="scientific">Helicobacter pylori (strain J99 / ATCC 700824)</name>
    <name type="common">Campylobacter pylori J99</name>
    <dbReference type="NCBI Taxonomy" id="85963"/>
    <lineage>
        <taxon>Bacteria</taxon>
        <taxon>Pseudomonadati</taxon>
        <taxon>Campylobacterota</taxon>
        <taxon>Epsilonproteobacteria</taxon>
        <taxon>Campylobacterales</taxon>
        <taxon>Helicobacteraceae</taxon>
        <taxon>Helicobacter</taxon>
    </lineage>
</organism>
<accession>P67709</accession>
<accession>O26079</accession>
<keyword id="KW-0975">Bacterial flagellum</keyword>
<name>FLIE_HELPJ</name>
<comment type="subcellular location">
    <subcellularLocation>
        <location evidence="1">Bacterial flagellum basal body</location>
    </subcellularLocation>
</comment>
<comment type="similarity">
    <text evidence="3">Belongs to the FliE family.</text>
</comment>